<gene>
    <name type="primary">BMT1</name>
    <name type="ordered locus">PAS_chr4_0451</name>
</gene>
<sequence length="652" mass="74338">MVDLFQWLKFYSMRRLGQVAITLVLLNLFVFLGYKFTPSTVIGSPSWEPAVVPTVFNESYLDSLQFTDINVDSFLSDTNGRISVTCDSLAYKGLVKTSKKKELDCDMAYIRRKIFSSEEYGVLADLEAQDITEEQRIKKHWFTFYGSSVYLPEHEVHYLVRRVLFSKVGRADTPVISLLVAQLYDKDWNELTPHTLEIVNPATGNVTPQTFPQLIHVPIEWSVDDKWKGTEDPRVFLKPSKTGVSEPIVLFNLQSSLCDGKRGMFVTSPFRSDKVNLLDIEDKERPNSEKNWSPFFLDDVEVSKYSTGYVHFVYSFNPLKVIKCSLDTGACRMIYESPEEGRFGSELRGATPMVKLPVHLSLPKGKEVWVAFPRTRLRDCGCSRTTYRPVLTLFVKEGNKFYTELISSSIDFHIDVLSYDAKGESCSGSISVLIPNGIDSWDVSKKQGGKSDILTLTLSEADRNTVVVHVKGLLDYLLVLNGEGPIHDSHSFKNVLSTNHFKSDTTLLNSVKAAECAIFSSRDYCKKYGETRGEPARYAKQMENERKEKEKKEKEAKEKLEAEKAEMEEAVRKAQEAIAQKEREKEEAEQEKKAQQEAKEKEAEEKAAKEKEAKENEAKKKIIVEKLAKEQEEAEKLEAKKKLYQLQEEERS</sequence>
<evidence type="ECO:0000255" key="1"/>
<evidence type="ECO:0000256" key="2">
    <source>
        <dbReference type="SAM" id="MobiDB-lite"/>
    </source>
</evidence>
<evidence type="ECO:0000269" key="3">
    <source>
    </source>
</evidence>
<evidence type="ECO:0000269" key="4">
    <source>
    </source>
</evidence>
<evidence type="ECO:0000305" key="5"/>
<reference key="1">
    <citation type="journal article" date="2009" name="Nat. Biotechnol.">
        <title>Genome sequence of the recombinant protein production host Pichia pastoris.</title>
        <authorList>
            <person name="De Schutter K."/>
            <person name="Lin Y.-C."/>
            <person name="Tiels P."/>
            <person name="Van Hecke A."/>
            <person name="Glinka S."/>
            <person name="Weber-Lehmann J."/>
            <person name="Rouze P."/>
            <person name="Van de Peer Y."/>
            <person name="Callewaert N."/>
        </authorList>
    </citation>
    <scope>NUCLEOTIDE SEQUENCE [LARGE SCALE GENOMIC DNA]</scope>
    <source>
        <strain>GS115 / ATCC 20864</strain>
    </source>
</reference>
<reference key="2">
    <citation type="journal article" date="2008" name="J. Biol. Chem.">
        <title>Identification of a new family of genes involved in beta-1,2-mannosylation of glycans in Pichia pastoris and Candida albicans.</title>
        <authorList>
            <person name="Mille C."/>
            <person name="Bobrowicz P."/>
            <person name="Trinel P.A."/>
            <person name="Li H."/>
            <person name="Maes E."/>
            <person name="Guerardel Y."/>
            <person name="Fradin C."/>
            <person name="Martinez-Esparza M."/>
            <person name="Davidson R.C."/>
            <person name="Janbon G."/>
            <person name="Poulain D."/>
            <person name="Wildt S."/>
        </authorList>
    </citation>
    <scope>IDENTIFICATION</scope>
    <scope>DISRUPTION PHENOTYPE</scope>
    <scope>FUNCTION</scope>
</reference>
<reference key="3">
    <citation type="journal article" date="2011" name="Glycobiology">
        <title>Elimination of beta-mannose glycan structures in Pichia pastoris.</title>
        <authorList>
            <person name="Hopkins D."/>
            <person name="Gomathinayagam S."/>
            <person name="Rittenhour A.M."/>
            <person name="Du M."/>
            <person name="Hoyt E."/>
            <person name="Karaveg K."/>
            <person name="Mitchell T."/>
            <person name="Nett J.H."/>
            <person name="Sharkey N.J."/>
            <person name="Stadheim T.A."/>
            <person name="Li H."/>
            <person name="Hamilton S.R."/>
        </authorList>
    </citation>
    <scope>FUNCTION</scope>
    <scope>DISRUPTION PHENOTYPE</scope>
</reference>
<dbReference type="EC" id="2.4.1.-"/>
<dbReference type="EMBL" id="FN392322">
    <property type="protein sequence ID" value="CAY71704.1"/>
    <property type="molecule type" value="Genomic_DNA"/>
</dbReference>
<dbReference type="RefSeq" id="XP_002493883.1">
    <property type="nucleotide sequence ID" value="XM_002493838.1"/>
</dbReference>
<dbReference type="SMR" id="C4R7X9"/>
<dbReference type="CAZy" id="GT91">
    <property type="family name" value="Glycosyltransferase Family 91"/>
</dbReference>
<dbReference type="GlyCosmos" id="C4R7X9">
    <property type="glycosylation" value="1 site, No reported glycans"/>
</dbReference>
<dbReference type="EnsemblFungi" id="CAY71704">
    <property type="protein sequence ID" value="CAY71704"/>
    <property type="gene ID" value="PAS_chr4_0451"/>
</dbReference>
<dbReference type="GeneID" id="8201400"/>
<dbReference type="KEGG" id="ppa:PAS_chr4_0451"/>
<dbReference type="eggNOG" id="ENOG502QTZG">
    <property type="taxonomic scope" value="Eukaryota"/>
</dbReference>
<dbReference type="HOGENOM" id="CLU_013841_2_1_1"/>
<dbReference type="InParanoid" id="C4R7X9"/>
<dbReference type="OMA" id="WKRAMYI"/>
<dbReference type="OrthoDB" id="3631276at2759"/>
<dbReference type="Proteomes" id="UP000000314">
    <property type="component" value="Chromosome 4"/>
</dbReference>
<dbReference type="GO" id="GO:0016020">
    <property type="term" value="C:membrane"/>
    <property type="evidence" value="ECO:0007669"/>
    <property type="project" value="UniProtKB-SubCell"/>
</dbReference>
<dbReference type="GO" id="GO:0015630">
    <property type="term" value="C:microtubule cytoskeleton"/>
    <property type="evidence" value="ECO:0007669"/>
    <property type="project" value="TreeGrafter"/>
</dbReference>
<dbReference type="GO" id="GO:0000030">
    <property type="term" value="F:mannosyltransferase activity"/>
    <property type="evidence" value="ECO:0007669"/>
    <property type="project" value="InterPro"/>
</dbReference>
<dbReference type="GO" id="GO:0071555">
    <property type="term" value="P:cell wall organization"/>
    <property type="evidence" value="ECO:0007669"/>
    <property type="project" value="UniProtKB-KW"/>
</dbReference>
<dbReference type="GO" id="GO:0000226">
    <property type="term" value="P:microtubule cytoskeleton organization"/>
    <property type="evidence" value="ECO:0007669"/>
    <property type="project" value="TreeGrafter"/>
</dbReference>
<dbReference type="InterPro" id="IPR021988">
    <property type="entry name" value="BMT1"/>
</dbReference>
<dbReference type="InterPro" id="IPR051483">
    <property type="entry name" value="MAP7_domain-containing"/>
</dbReference>
<dbReference type="PANTHER" id="PTHR15073:SF3">
    <property type="entry name" value="MAP7 DOMAIN-CONTAINING PROTEIN 2"/>
    <property type="match status" value="1"/>
</dbReference>
<dbReference type="PANTHER" id="PTHR15073">
    <property type="entry name" value="MICROTUBULE-ASSOCIATED PROTEIN"/>
    <property type="match status" value="1"/>
</dbReference>
<dbReference type="Pfam" id="PF12141">
    <property type="entry name" value="BMT"/>
    <property type="match status" value="2"/>
</dbReference>
<feature type="chain" id="PRO_0000426098" description="Beta-mannosyltransferase 1">
    <location>
        <begin position="1"/>
        <end position="652"/>
    </location>
</feature>
<feature type="topological domain" description="Cytoplasmic" evidence="1">
    <location>
        <begin position="1"/>
        <end position="15"/>
    </location>
</feature>
<feature type="transmembrane region" description="Helical" evidence="1">
    <location>
        <begin position="16"/>
        <end position="34"/>
    </location>
</feature>
<feature type="topological domain" description="Extracellular" evidence="1">
    <location>
        <begin position="35"/>
        <end position="652"/>
    </location>
</feature>
<feature type="region of interest" description="Disordered" evidence="2">
    <location>
        <begin position="536"/>
        <end position="621"/>
    </location>
</feature>
<feature type="coiled-coil region" evidence="1">
    <location>
        <begin position="535"/>
        <end position="652"/>
    </location>
</feature>
<feature type="glycosylation site" description="N-linked (GlcNAc...) asparagine" evidence="1">
    <location>
        <position position="57"/>
    </location>
</feature>
<keyword id="KW-0961">Cell wall biogenesis/degradation</keyword>
<keyword id="KW-0175">Coiled coil</keyword>
<keyword id="KW-0325">Glycoprotein</keyword>
<keyword id="KW-0328">Glycosyltransferase</keyword>
<keyword id="KW-0472">Membrane</keyword>
<keyword id="KW-1185">Reference proteome</keyword>
<keyword id="KW-0735">Signal-anchor</keyword>
<keyword id="KW-0808">Transferase</keyword>
<keyword id="KW-0812">Transmembrane</keyword>
<keyword id="KW-1133">Transmembrane helix</keyword>
<accession>C4R7X9</accession>
<proteinExistence type="inferred from homology"/>
<comment type="function">
    <text evidence="3 4">Beta-mannosyltransferase involved in cell wall biosynthesis. Involved in the beta-mannosylation of outer chains of N-glycans.</text>
</comment>
<comment type="subcellular location">
    <subcellularLocation>
        <location evidence="5">Membrane</location>
        <topology evidence="5">Single-pass type II membrane protein</topology>
    </subcellularLocation>
</comment>
<comment type="disruption phenotype">
    <text evidence="3 4">Impaired expression of beta-mannose epitopes and decreases alpha-mannosidase resistant glycans.</text>
</comment>
<comment type="similarity">
    <text evidence="5">Belongs to the BMT family.</text>
</comment>
<protein>
    <recommendedName>
        <fullName>Beta-mannosyltransferase 1</fullName>
        <ecNumber>2.4.1.-</ecNumber>
    </recommendedName>
</protein>
<name>BMT1_KOMPG</name>
<organism>
    <name type="scientific">Komagataella phaffii (strain GS115 / ATCC 20864)</name>
    <name type="common">Yeast</name>
    <name type="synonym">Pichia pastoris</name>
    <dbReference type="NCBI Taxonomy" id="644223"/>
    <lineage>
        <taxon>Eukaryota</taxon>
        <taxon>Fungi</taxon>
        <taxon>Dikarya</taxon>
        <taxon>Ascomycota</taxon>
        <taxon>Saccharomycotina</taxon>
        <taxon>Pichiomycetes</taxon>
        <taxon>Pichiales</taxon>
        <taxon>Pichiaceae</taxon>
        <taxon>Komagataella</taxon>
    </lineage>
</organism>